<reference key="1">
    <citation type="journal article" date="1996" name="J. Mol. Evol.">
        <title>The mitochondrial DNA molecule of Sumatran orangutan and a molecular proposal for two (Bornean and Sumatran) species of orangutan.</title>
        <authorList>
            <person name="Xu X."/>
            <person name="Arnason U."/>
        </authorList>
    </citation>
    <scope>NUCLEOTIDE SEQUENCE [LARGE SCALE GENOMIC DNA]</scope>
</reference>
<organism>
    <name type="scientific">Pongo abelii</name>
    <name type="common">Sumatran orangutan</name>
    <name type="synonym">Pongo pygmaeus abelii</name>
    <dbReference type="NCBI Taxonomy" id="9601"/>
    <lineage>
        <taxon>Eukaryota</taxon>
        <taxon>Metazoa</taxon>
        <taxon>Chordata</taxon>
        <taxon>Craniata</taxon>
        <taxon>Vertebrata</taxon>
        <taxon>Euteleostomi</taxon>
        <taxon>Mammalia</taxon>
        <taxon>Eutheria</taxon>
        <taxon>Euarchontoglires</taxon>
        <taxon>Primates</taxon>
        <taxon>Haplorrhini</taxon>
        <taxon>Catarrhini</taxon>
        <taxon>Hominidae</taxon>
        <taxon>Pongo</taxon>
    </lineage>
</organism>
<dbReference type="EC" id="7.1.1.9"/>
<dbReference type="EMBL" id="X97707">
    <property type="protein sequence ID" value="CAA66286.1"/>
    <property type="molecule type" value="Genomic_DNA"/>
</dbReference>
<dbReference type="RefSeq" id="NP_007838.1">
    <property type="nucleotide sequence ID" value="NC_002083.1"/>
</dbReference>
<dbReference type="SMR" id="P92693"/>
<dbReference type="FunCoup" id="P92693">
    <property type="interactions" value="227"/>
</dbReference>
<dbReference type="STRING" id="9601.ENSPPYP00000023442"/>
<dbReference type="Ensembl" id="ENSPPYT00000024437.1">
    <property type="protein sequence ID" value="ENSPPYP00000023442.1"/>
    <property type="gene ID" value="ENSPPYG00000020958.1"/>
</dbReference>
<dbReference type="GeneID" id="808475"/>
<dbReference type="KEGG" id="pon:808475"/>
<dbReference type="CTD" id="4513"/>
<dbReference type="eggNOG" id="KOG4767">
    <property type="taxonomic scope" value="Eukaryota"/>
</dbReference>
<dbReference type="GeneTree" id="ENSGT00390000017410"/>
<dbReference type="HOGENOM" id="CLU_036876_2_3_1"/>
<dbReference type="InParanoid" id="P92693"/>
<dbReference type="OMA" id="WSYEYTD"/>
<dbReference type="TreeFam" id="TF344269"/>
<dbReference type="Proteomes" id="UP000001595">
    <property type="component" value="Mitochondrion"/>
</dbReference>
<dbReference type="GO" id="GO:0005743">
    <property type="term" value="C:mitochondrial inner membrane"/>
    <property type="evidence" value="ECO:0007669"/>
    <property type="project" value="UniProtKB-SubCell"/>
</dbReference>
<dbReference type="GO" id="GO:0005739">
    <property type="term" value="C:mitochondrion"/>
    <property type="evidence" value="ECO:0000250"/>
    <property type="project" value="UniProtKB"/>
</dbReference>
<dbReference type="GO" id="GO:0045277">
    <property type="term" value="C:respiratory chain complex IV"/>
    <property type="evidence" value="ECO:0000250"/>
    <property type="project" value="UniProtKB"/>
</dbReference>
<dbReference type="GO" id="GO:0005507">
    <property type="term" value="F:copper ion binding"/>
    <property type="evidence" value="ECO:0007669"/>
    <property type="project" value="InterPro"/>
</dbReference>
<dbReference type="GO" id="GO:0004129">
    <property type="term" value="F:cytochrome-c oxidase activity"/>
    <property type="evidence" value="ECO:0007669"/>
    <property type="project" value="UniProtKB-EC"/>
</dbReference>
<dbReference type="GO" id="GO:0042773">
    <property type="term" value="P:ATP synthesis coupled electron transport"/>
    <property type="evidence" value="ECO:0007669"/>
    <property type="project" value="TreeGrafter"/>
</dbReference>
<dbReference type="CDD" id="cd13912">
    <property type="entry name" value="CcO_II_C"/>
    <property type="match status" value="1"/>
</dbReference>
<dbReference type="FunFam" id="1.10.287.90:FF:000001">
    <property type="entry name" value="Cytochrome c oxidase subunit 2"/>
    <property type="match status" value="1"/>
</dbReference>
<dbReference type="FunFam" id="2.60.40.420:FF:000001">
    <property type="entry name" value="Cytochrome c oxidase subunit 2"/>
    <property type="match status" value="1"/>
</dbReference>
<dbReference type="Gene3D" id="1.10.287.90">
    <property type="match status" value="1"/>
</dbReference>
<dbReference type="Gene3D" id="2.60.40.420">
    <property type="entry name" value="Cupredoxins - blue copper proteins"/>
    <property type="match status" value="1"/>
</dbReference>
<dbReference type="InterPro" id="IPR045187">
    <property type="entry name" value="CcO_II"/>
</dbReference>
<dbReference type="InterPro" id="IPR002429">
    <property type="entry name" value="CcO_II-like_C"/>
</dbReference>
<dbReference type="InterPro" id="IPR034210">
    <property type="entry name" value="CcO_II_C"/>
</dbReference>
<dbReference type="InterPro" id="IPR001505">
    <property type="entry name" value="Copper_CuA"/>
</dbReference>
<dbReference type="InterPro" id="IPR008972">
    <property type="entry name" value="Cupredoxin"/>
</dbReference>
<dbReference type="InterPro" id="IPR014222">
    <property type="entry name" value="Cyt_c_oxidase_su2"/>
</dbReference>
<dbReference type="InterPro" id="IPR011759">
    <property type="entry name" value="Cyt_c_oxidase_su2_TM_dom"/>
</dbReference>
<dbReference type="InterPro" id="IPR036257">
    <property type="entry name" value="Cyt_c_oxidase_su2_TM_sf"/>
</dbReference>
<dbReference type="NCBIfam" id="TIGR02866">
    <property type="entry name" value="CoxB"/>
    <property type="match status" value="1"/>
</dbReference>
<dbReference type="PANTHER" id="PTHR22888:SF9">
    <property type="entry name" value="CYTOCHROME C OXIDASE SUBUNIT 2"/>
    <property type="match status" value="1"/>
</dbReference>
<dbReference type="PANTHER" id="PTHR22888">
    <property type="entry name" value="CYTOCHROME C OXIDASE, SUBUNIT II"/>
    <property type="match status" value="1"/>
</dbReference>
<dbReference type="Pfam" id="PF00116">
    <property type="entry name" value="COX2"/>
    <property type="match status" value="1"/>
</dbReference>
<dbReference type="Pfam" id="PF02790">
    <property type="entry name" value="COX2_TM"/>
    <property type="match status" value="1"/>
</dbReference>
<dbReference type="PRINTS" id="PR01166">
    <property type="entry name" value="CYCOXIDASEII"/>
</dbReference>
<dbReference type="SUPFAM" id="SSF49503">
    <property type="entry name" value="Cupredoxins"/>
    <property type="match status" value="1"/>
</dbReference>
<dbReference type="SUPFAM" id="SSF81464">
    <property type="entry name" value="Cytochrome c oxidase subunit II-like, transmembrane region"/>
    <property type="match status" value="1"/>
</dbReference>
<dbReference type="PROSITE" id="PS00078">
    <property type="entry name" value="COX2"/>
    <property type="match status" value="1"/>
</dbReference>
<dbReference type="PROSITE" id="PS50857">
    <property type="entry name" value="COX2_CUA"/>
    <property type="match status" value="1"/>
</dbReference>
<dbReference type="PROSITE" id="PS50999">
    <property type="entry name" value="COX2_TM"/>
    <property type="match status" value="1"/>
</dbReference>
<sequence length="227" mass="25582">MAHAAQVGLQDATSPIMEELVIFHDHALMIIFLICFLVLYALFLTLTTKLTNTSISDAQEMETIWTILPAIILILIALPSLRILYLTDEINDPSFTIKSIGHQWYWTYEYTDYGGLIFNSYMLPPLFLEPGDLRLLDVDNRVVLPVEAPVRMMITSQDVLHSWTVPSLGLKTDAIPGRLNQTTFTATRPGVYYGQCSEICGANHSFMPIVLELIPLKIFEMGPVFTL</sequence>
<feature type="chain" id="PRO_0000183668" description="Cytochrome c oxidase subunit 2">
    <location>
        <begin position="1"/>
        <end position="227"/>
    </location>
</feature>
<feature type="topological domain" description="Mitochondrial intermembrane" evidence="3">
    <location>
        <begin position="1"/>
        <end position="14"/>
    </location>
</feature>
<feature type="transmembrane region" description="Helical; Name=I" evidence="3">
    <location>
        <begin position="15"/>
        <end position="45"/>
    </location>
</feature>
<feature type="topological domain" description="Mitochondrial matrix" evidence="3">
    <location>
        <begin position="46"/>
        <end position="59"/>
    </location>
</feature>
<feature type="transmembrane region" description="Helical; Name=II" evidence="3">
    <location>
        <begin position="60"/>
        <end position="87"/>
    </location>
</feature>
<feature type="topological domain" description="Mitochondrial intermembrane" evidence="3">
    <location>
        <begin position="88"/>
        <end position="227"/>
    </location>
</feature>
<feature type="binding site" evidence="3">
    <location>
        <position position="161"/>
    </location>
    <ligand>
        <name>Cu cation</name>
        <dbReference type="ChEBI" id="CHEBI:23378"/>
        <label>A1</label>
    </ligand>
</feature>
<feature type="binding site" evidence="3">
    <location>
        <position position="196"/>
    </location>
    <ligand>
        <name>Cu cation</name>
        <dbReference type="ChEBI" id="CHEBI:23378"/>
        <label>A1</label>
    </ligand>
</feature>
<feature type="binding site" evidence="3">
    <location>
        <position position="196"/>
    </location>
    <ligand>
        <name>Cu cation</name>
        <dbReference type="ChEBI" id="CHEBI:23378"/>
        <label>A2</label>
    </ligand>
</feature>
<feature type="binding site" evidence="3">
    <location>
        <position position="198"/>
    </location>
    <ligand>
        <name>Cu cation</name>
        <dbReference type="ChEBI" id="CHEBI:23378"/>
        <label>A2</label>
    </ligand>
</feature>
<feature type="binding site" evidence="3">
    <location>
        <position position="198"/>
    </location>
    <ligand>
        <name>Mg(2+)</name>
        <dbReference type="ChEBI" id="CHEBI:18420"/>
        <note>ligand shared with MT-CO1</note>
    </ligand>
</feature>
<feature type="binding site" evidence="3">
    <location>
        <position position="200"/>
    </location>
    <ligand>
        <name>Cu cation</name>
        <dbReference type="ChEBI" id="CHEBI:23378"/>
        <label>A1</label>
    </ligand>
</feature>
<feature type="binding site" evidence="3">
    <location>
        <position position="200"/>
    </location>
    <ligand>
        <name>Cu cation</name>
        <dbReference type="ChEBI" id="CHEBI:23378"/>
        <label>A2</label>
    </ligand>
</feature>
<feature type="binding site" evidence="3">
    <location>
        <position position="204"/>
    </location>
    <ligand>
        <name>Cu cation</name>
        <dbReference type="ChEBI" id="CHEBI:23378"/>
        <label>A2</label>
    </ligand>
</feature>
<feature type="binding site" evidence="3">
    <location>
        <position position="207"/>
    </location>
    <ligand>
        <name>Cu cation</name>
        <dbReference type="ChEBI" id="CHEBI:23378"/>
        <label>A1</label>
    </ligand>
</feature>
<protein>
    <recommendedName>
        <fullName>Cytochrome c oxidase subunit 2</fullName>
        <ecNumber>7.1.1.9</ecNumber>
    </recommendedName>
    <alternativeName>
        <fullName>Cytochrome c oxidase polypeptide II</fullName>
    </alternativeName>
</protein>
<gene>
    <name type="primary">MT-CO2</name>
    <name type="synonym">COII</name>
    <name type="synonym">COX2</name>
    <name type="synonym">COXII</name>
    <name type="synonym">MTCO2</name>
</gene>
<keyword id="KW-0186">Copper</keyword>
<keyword id="KW-0249">Electron transport</keyword>
<keyword id="KW-0460">Magnesium</keyword>
<keyword id="KW-0472">Membrane</keyword>
<keyword id="KW-0479">Metal-binding</keyword>
<keyword id="KW-0496">Mitochondrion</keyword>
<keyword id="KW-0999">Mitochondrion inner membrane</keyword>
<keyword id="KW-1185">Reference proteome</keyword>
<keyword id="KW-0679">Respiratory chain</keyword>
<keyword id="KW-1278">Translocase</keyword>
<keyword id="KW-0812">Transmembrane</keyword>
<keyword id="KW-1133">Transmembrane helix</keyword>
<keyword id="KW-0813">Transport</keyword>
<geneLocation type="mitochondrion"/>
<evidence type="ECO:0000250" key="1">
    <source>
        <dbReference type="UniProtKB" id="P00403"/>
    </source>
</evidence>
<evidence type="ECO:0000250" key="2">
    <source>
        <dbReference type="UniProtKB" id="P00410"/>
    </source>
</evidence>
<evidence type="ECO:0000250" key="3">
    <source>
        <dbReference type="UniProtKB" id="P68530"/>
    </source>
</evidence>
<evidence type="ECO:0000305" key="4"/>
<comment type="function">
    <text evidence="2">Component of the cytochrome c oxidase, the last enzyme in the mitochondrial electron transport chain which drives oxidative phosphorylation. The respiratory chain contains 3 multisubunit complexes succinate dehydrogenase (complex II, CII), ubiquinol-cytochrome c oxidoreductase (cytochrome b-c1 complex, complex III, CIII) and cytochrome c oxidase (complex IV, CIV), that cooperate to transfer electrons derived from NADH and succinate to molecular oxygen, creating an electrochemical gradient over the inner membrane that drives transmembrane transport and the ATP synthase. Cytochrome c oxidase is the component of the respiratory chain that catalyzes the reduction of oxygen to water. Electrons originating from reduced cytochrome c in the intermembrane space (IMS) are transferred via the dinuclear copper A center (CU(A)) of subunit 2 and heme A of subunit 1 to the active site in subunit 1, a binuclear center (BNC) formed by heme A3 and copper B (CU(B)). The BNC reduces molecular oxygen to 2 water molecules using 4 electrons from cytochrome c in the IMS and 4 protons from the mitochondrial matrix.</text>
</comment>
<comment type="catalytic activity">
    <reaction evidence="2">
        <text>4 Fe(II)-[cytochrome c] + O2 + 8 H(+)(in) = 4 Fe(III)-[cytochrome c] + 2 H2O + 4 H(+)(out)</text>
        <dbReference type="Rhea" id="RHEA:11436"/>
        <dbReference type="Rhea" id="RHEA-COMP:10350"/>
        <dbReference type="Rhea" id="RHEA-COMP:14399"/>
        <dbReference type="ChEBI" id="CHEBI:15377"/>
        <dbReference type="ChEBI" id="CHEBI:15378"/>
        <dbReference type="ChEBI" id="CHEBI:15379"/>
        <dbReference type="ChEBI" id="CHEBI:29033"/>
        <dbReference type="ChEBI" id="CHEBI:29034"/>
        <dbReference type="EC" id="7.1.1.9"/>
    </reaction>
    <physiologicalReaction direction="left-to-right" evidence="2">
        <dbReference type="Rhea" id="RHEA:11437"/>
    </physiologicalReaction>
</comment>
<comment type="cofactor">
    <cofactor evidence="3">
        <name>Cu cation</name>
        <dbReference type="ChEBI" id="CHEBI:23378"/>
    </cofactor>
    <text evidence="3">Binds a dinuclear copper A center per subunit.</text>
</comment>
<comment type="subunit">
    <text evidence="1 3">Component of the cytochrome c oxidase (complex IV, CIV), a multisubunit enzyme composed of 14 subunits. The complex is composed of a catalytic core of 3 subunits MT-CO1, MT-CO2 and MT-CO3, encoded in the mitochondrial DNA, and 11 supernumerary subunits COX4I, COX5A, COX5B, COX6A, COX6B, COX6C, COX7A, COX7B, COX7C, COX8 and NDUFA4, which are encoded in the nuclear genome. The complex exists as a monomer or a dimer and forms supercomplexes (SCs) in the inner mitochondrial membrane with NADH-ubiquinone oxidoreductase (complex I, CI) and ubiquinol-cytochrome c oxidoreductase (cytochrome b-c1 complex, complex III, CIII), resulting in different assemblies (supercomplex SCI(1)III(2)IV(1) and megacomplex MCI(2)III(2)IV(2)) (By similarity). Found in a complex with TMEM177, COA6, COX18, COX20, SCO1 and SCO2. Interacts with TMEM177 in a COX20-dependent manner. Interacts with COX20. Interacts with COX16 (By similarity).</text>
</comment>
<comment type="subcellular location">
    <subcellularLocation>
        <location evidence="3">Mitochondrion inner membrane</location>
        <topology evidence="3">Multi-pass membrane protein</topology>
    </subcellularLocation>
</comment>
<comment type="similarity">
    <text evidence="4">Belongs to the cytochrome c oxidase subunit 2 family.</text>
</comment>
<accession>P92693</accession>
<name>COX2_PONAB</name>
<proteinExistence type="inferred from homology"/>